<name>QUEA_HALH5</name>
<gene>
    <name evidence="1" type="primary">queA</name>
    <name type="ordered locus">BH1227</name>
</gene>
<proteinExistence type="inferred from homology"/>
<reference key="1">
    <citation type="journal article" date="2000" name="Nucleic Acids Res.">
        <title>Complete genome sequence of the alkaliphilic bacterium Bacillus halodurans and genomic sequence comparison with Bacillus subtilis.</title>
        <authorList>
            <person name="Takami H."/>
            <person name="Nakasone K."/>
            <person name="Takaki Y."/>
            <person name="Maeno G."/>
            <person name="Sasaki R."/>
            <person name="Masui N."/>
            <person name="Fuji F."/>
            <person name="Hirama C."/>
            <person name="Nakamura Y."/>
            <person name="Ogasawara N."/>
            <person name="Kuhara S."/>
            <person name="Horikoshi K."/>
        </authorList>
    </citation>
    <scope>NUCLEOTIDE SEQUENCE [LARGE SCALE GENOMIC DNA]</scope>
    <source>
        <strain>ATCC BAA-125 / DSM 18197 / FERM 7344 / JCM 9153 / C-125</strain>
    </source>
</reference>
<organism>
    <name type="scientific">Halalkalibacterium halodurans (strain ATCC BAA-125 / DSM 18197 / FERM 7344 / JCM 9153 / C-125)</name>
    <name type="common">Bacillus halodurans</name>
    <dbReference type="NCBI Taxonomy" id="272558"/>
    <lineage>
        <taxon>Bacteria</taxon>
        <taxon>Bacillati</taxon>
        <taxon>Bacillota</taxon>
        <taxon>Bacilli</taxon>
        <taxon>Bacillales</taxon>
        <taxon>Bacillaceae</taxon>
        <taxon>Halalkalibacterium (ex Joshi et al. 2022)</taxon>
    </lineage>
</organism>
<comment type="function">
    <text evidence="1">Transfers and isomerizes the ribose moiety from AdoMet to the 7-aminomethyl group of 7-deazaguanine (preQ1-tRNA) to give epoxyqueuosine (oQ-tRNA).</text>
</comment>
<comment type="catalytic activity">
    <reaction evidence="1">
        <text>7-aminomethyl-7-carbaguanosine(34) in tRNA + S-adenosyl-L-methionine = epoxyqueuosine(34) in tRNA + adenine + L-methionine + 2 H(+)</text>
        <dbReference type="Rhea" id="RHEA:32155"/>
        <dbReference type="Rhea" id="RHEA-COMP:10342"/>
        <dbReference type="Rhea" id="RHEA-COMP:18582"/>
        <dbReference type="ChEBI" id="CHEBI:15378"/>
        <dbReference type="ChEBI" id="CHEBI:16708"/>
        <dbReference type="ChEBI" id="CHEBI:57844"/>
        <dbReference type="ChEBI" id="CHEBI:59789"/>
        <dbReference type="ChEBI" id="CHEBI:82833"/>
        <dbReference type="ChEBI" id="CHEBI:194443"/>
        <dbReference type="EC" id="2.4.99.17"/>
    </reaction>
</comment>
<comment type="pathway">
    <text evidence="1">tRNA modification; tRNA-queuosine biosynthesis.</text>
</comment>
<comment type="subunit">
    <text evidence="1">Monomer.</text>
</comment>
<comment type="subcellular location">
    <subcellularLocation>
        <location evidence="1">Cytoplasm</location>
    </subcellularLocation>
</comment>
<comment type="similarity">
    <text evidence="1">Belongs to the QueA family.</text>
</comment>
<feature type="chain" id="PRO_0000165379" description="S-adenosylmethionine:tRNA ribosyltransferase-isomerase">
    <location>
        <begin position="1"/>
        <end position="347"/>
    </location>
</feature>
<evidence type="ECO:0000255" key="1">
    <source>
        <dbReference type="HAMAP-Rule" id="MF_00113"/>
    </source>
</evidence>
<protein>
    <recommendedName>
        <fullName evidence="1">S-adenosylmethionine:tRNA ribosyltransferase-isomerase</fullName>
        <ecNumber evidence="1">2.4.99.17</ecNumber>
    </recommendedName>
    <alternativeName>
        <fullName evidence="1">Queuosine biosynthesis protein QueA</fullName>
    </alternativeName>
</protein>
<dbReference type="EC" id="2.4.99.17" evidence="1"/>
<dbReference type="EMBL" id="BA000004">
    <property type="protein sequence ID" value="BAB04946.1"/>
    <property type="molecule type" value="Genomic_DNA"/>
</dbReference>
<dbReference type="PIR" id="C83803">
    <property type="entry name" value="C83803"/>
</dbReference>
<dbReference type="RefSeq" id="WP_010897395.1">
    <property type="nucleotide sequence ID" value="NC_002570.2"/>
</dbReference>
<dbReference type="SMR" id="Q9KDI6"/>
<dbReference type="STRING" id="272558.gene:10727121"/>
<dbReference type="GeneID" id="87596846"/>
<dbReference type="KEGG" id="bha:BH1227"/>
<dbReference type="eggNOG" id="COG0809">
    <property type="taxonomic scope" value="Bacteria"/>
</dbReference>
<dbReference type="HOGENOM" id="CLU_039110_1_0_9"/>
<dbReference type="OrthoDB" id="9805933at2"/>
<dbReference type="UniPathway" id="UPA00392"/>
<dbReference type="Proteomes" id="UP000001258">
    <property type="component" value="Chromosome"/>
</dbReference>
<dbReference type="GO" id="GO:0005737">
    <property type="term" value="C:cytoplasm"/>
    <property type="evidence" value="ECO:0007669"/>
    <property type="project" value="UniProtKB-SubCell"/>
</dbReference>
<dbReference type="GO" id="GO:0051075">
    <property type="term" value="F:S-adenosylmethionine:tRNA ribosyltransferase-isomerase activity"/>
    <property type="evidence" value="ECO:0007669"/>
    <property type="project" value="UniProtKB-EC"/>
</dbReference>
<dbReference type="GO" id="GO:0008616">
    <property type="term" value="P:queuosine biosynthetic process"/>
    <property type="evidence" value="ECO:0007669"/>
    <property type="project" value="UniProtKB-UniRule"/>
</dbReference>
<dbReference type="GO" id="GO:0002099">
    <property type="term" value="P:tRNA wobble guanine modification"/>
    <property type="evidence" value="ECO:0007669"/>
    <property type="project" value="TreeGrafter"/>
</dbReference>
<dbReference type="FunFam" id="2.40.10.240:FF:000002">
    <property type="entry name" value="S-adenosylmethionine:tRNA ribosyltransferase-isomerase"/>
    <property type="match status" value="1"/>
</dbReference>
<dbReference type="FunFam" id="3.40.1780.10:FF:000001">
    <property type="entry name" value="S-adenosylmethionine:tRNA ribosyltransferase-isomerase"/>
    <property type="match status" value="1"/>
</dbReference>
<dbReference type="Gene3D" id="2.40.10.240">
    <property type="entry name" value="QueA-like"/>
    <property type="match status" value="1"/>
</dbReference>
<dbReference type="Gene3D" id="3.40.1780.10">
    <property type="entry name" value="QueA-like"/>
    <property type="match status" value="1"/>
</dbReference>
<dbReference type="HAMAP" id="MF_00113">
    <property type="entry name" value="QueA"/>
    <property type="match status" value="1"/>
</dbReference>
<dbReference type="InterPro" id="IPR003699">
    <property type="entry name" value="QueA"/>
</dbReference>
<dbReference type="InterPro" id="IPR042118">
    <property type="entry name" value="QueA_dom1"/>
</dbReference>
<dbReference type="InterPro" id="IPR042119">
    <property type="entry name" value="QueA_dom2"/>
</dbReference>
<dbReference type="InterPro" id="IPR036100">
    <property type="entry name" value="QueA_sf"/>
</dbReference>
<dbReference type="NCBIfam" id="NF001140">
    <property type="entry name" value="PRK00147.1"/>
    <property type="match status" value="1"/>
</dbReference>
<dbReference type="NCBIfam" id="TIGR00113">
    <property type="entry name" value="queA"/>
    <property type="match status" value="1"/>
</dbReference>
<dbReference type="PANTHER" id="PTHR30307">
    <property type="entry name" value="S-ADENOSYLMETHIONINE:TRNA RIBOSYLTRANSFERASE-ISOMERASE"/>
    <property type="match status" value="1"/>
</dbReference>
<dbReference type="PANTHER" id="PTHR30307:SF0">
    <property type="entry name" value="S-ADENOSYLMETHIONINE:TRNA RIBOSYLTRANSFERASE-ISOMERASE"/>
    <property type="match status" value="1"/>
</dbReference>
<dbReference type="Pfam" id="PF02547">
    <property type="entry name" value="Queuosine_synth"/>
    <property type="match status" value="1"/>
</dbReference>
<dbReference type="SUPFAM" id="SSF111337">
    <property type="entry name" value="QueA-like"/>
    <property type="match status" value="1"/>
</dbReference>
<accession>Q9KDI6</accession>
<sequence>MNVRDFDFHLPEKLIAQTPLKDRTASRLLVLDKHTGAVEDKKFPDLLQFIEAGDCLVLNDTRVLPARLFGVKEETGAQVEVLLLKQMEGDRWETLVKPAKRLKVGTIIRFGNGELTATCVQELEHGGRVLEFSYEGIFHEVLDQLGEMPLPPYIKEQLDDKDRYQTVFAKNRGSAAAPTAGLHFTEELLDQLKQKGVHLAFITLHVGLGTFRPVSVEEIEEHEMHAEFYQMSAGTARLLNEVKRQGGRIIAVGTTSARTLETIRQEHDEFVETSGWTSIFIYPGYEFKGIDGLITNFHLPKSTLVMLVSALAGRENLLNAYAHAVKQSYRFFSFGDAMFIYDKKTNS</sequence>
<keyword id="KW-0963">Cytoplasm</keyword>
<keyword id="KW-0671">Queuosine biosynthesis</keyword>
<keyword id="KW-1185">Reference proteome</keyword>
<keyword id="KW-0949">S-adenosyl-L-methionine</keyword>
<keyword id="KW-0808">Transferase</keyword>